<evidence type="ECO:0000255" key="1">
    <source>
        <dbReference type="HAMAP-Rule" id="MF_01815"/>
    </source>
</evidence>
<comment type="function">
    <text evidence="1">Catalyzes the condensation reaction of fatty acid synthesis by the addition to an acyl acceptor of two carbons from malonyl-ACP. Catalyzes the first condensation reaction which initiates fatty acid synthesis and may therefore play a role in governing the total rate of fatty acid production. Possesses both acetoacetyl-ACP synthase and acetyl transacylase activities. Its substrate specificity determines the biosynthesis of branched-chain and/or straight-chain of fatty acids.</text>
</comment>
<comment type="catalytic activity">
    <reaction evidence="1">
        <text>malonyl-[ACP] + acetyl-CoA + H(+) = 3-oxobutanoyl-[ACP] + CO2 + CoA</text>
        <dbReference type="Rhea" id="RHEA:12080"/>
        <dbReference type="Rhea" id="RHEA-COMP:9623"/>
        <dbReference type="Rhea" id="RHEA-COMP:9625"/>
        <dbReference type="ChEBI" id="CHEBI:15378"/>
        <dbReference type="ChEBI" id="CHEBI:16526"/>
        <dbReference type="ChEBI" id="CHEBI:57287"/>
        <dbReference type="ChEBI" id="CHEBI:57288"/>
        <dbReference type="ChEBI" id="CHEBI:78449"/>
        <dbReference type="ChEBI" id="CHEBI:78450"/>
        <dbReference type="EC" id="2.3.1.180"/>
    </reaction>
</comment>
<comment type="pathway">
    <text evidence="1">Lipid metabolism; fatty acid biosynthesis.</text>
</comment>
<comment type="subunit">
    <text evidence="1">Homodimer.</text>
</comment>
<comment type="subcellular location">
    <subcellularLocation>
        <location evidence="1">Cytoplasm</location>
    </subcellularLocation>
</comment>
<comment type="domain">
    <text evidence="1">The last Arg residue of the ACP-binding site is essential for the weak association between ACP/AcpP and FabH.</text>
</comment>
<comment type="similarity">
    <text evidence="1">Belongs to the thiolase-like superfamily. FabH family.</text>
</comment>
<organism>
    <name type="scientific">Granulibacter bethesdensis (strain ATCC BAA-1260 / CGDNIH1)</name>
    <dbReference type="NCBI Taxonomy" id="391165"/>
    <lineage>
        <taxon>Bacteria</taxon>
        <taxon>Pseudomonadati</taxon>
        <taxon>Pseudomonadota</taxon>
        <taxon>Alphaproteobacteria</taxon>
        <taxon>Acetobacterales</taxon>
        <taxon>Acetobacteraceae</taxon>
        <taxon>Granulibacter</taxon>
    </lineage>
</organism>
<name>FABH_GRABC</name>
<reference key="1">
    <citation type="journal article" date="2007" name="J. Bacteriol.">
        <title>Genome sequence analysis of the emerging human pathogenic acetic acid bacterium Granulibacter bethesdensis.</title>
        <authorList>
            <person name="Greenberg D.E."/>
            <person name="Porcella S.F."/>
            <person name="Zelazny A.M."/>
            <person name="Virtaneva K."/>
            <person name="Sturdevant D.E."/>
            <person name="Kupko J.J. III"/>
            <person name="Barbian K.D."/>
            <person name="Babar A."/>
            <person name="Dorward D.W."/>
            <person name="Holland S.M."/>
        </authorList>
    </citation>
    <scope>NUCLEOTIDE SEQUENCE [LARGE SCALE GENOMIC DNA]</scope>
    <source>
        <strain>ATCC BAA-1260 / CGDNIH1</strain>
    </source>
</reference>
<feature type="chain" id="PRO_1000070231" description="Beta-ketoacyl-[acyl-carrier-protein] synthase III">
    <location>
        <begin position="1"/>
        <end position="322"/>
    </location>
</feature>
<feature type="region of interest" description="ACP-binding" evidence="1">
    <location>
        <begin position="250"/>
        <end position="254"/>
    </location>
</feature>
<feature type="active site" evidence="1">
    <location>
        <position position="113"/>
    </location>
</feature>
<feature type="active site" evidence="1">
    <location>
        <position position="249"/>
    </location>
</feature>
<feature type="active site" evidence="1">
    <location>
        <position position="279"/>
    </location>
</feature>
<dbReference type="EC" id="2.3.1.180" evidence="1"/>
<dbReference type="EMBL" id="CP000394">
    <property type="protein sequence ID" value="ABI61912.1"/>
    <property type="molecule type" value="Genomic_DNA"/>
</dbReference>
<dbReference type="RefSeq" id="WP_011631721.1">
    <property type="nucleotide sequence ID" value="NC_008343.2"/>
</dbReference>
<dbReference type="SMR" id="Q0BTE0"/>
<dbReference type="STRING" id="391165.GbCGDNIH1_1014"/>
<dbReference type="GeneID" id="69745273"/>
<dbReference type="KEGG" id="gbe:GbCGDNIH1_1014"/>
<dbReference type="eggNOG" id="COG0332">
    <property type="taxonomic scope" value="Bacteria"/>
</dbReference>
<dbReference type="HOGENOM" id="CLU_039592_3_1_5"/>
<dbReference type="OrthoDB" id="9815506at2"/>
<dbReference type="UniPathway" id="UPA00094"/>
<dbReference type="Proteomes" id="UP000001963">
    <property type="component" value="Chromosome"/>
</dbReference>
<dbReference type="GO" id="GO:0005737">
    <property type="term" value="C:cytoplasm"/>
    <property type="evidence" value="ECO:0007669"/>
    <property type="project" value="UniProtKB-SubCell"/>
</dbReference>
<dbReference type="GO" id="GO:0004315">
    <property type="term" value="F:3-oxoacyl-[acyl-carrier-protein] synthase activity"/>
    <property type="evidence" value="ECO:0007669"/>
    <property type="project" value="InterPro"/>
</dbReference>
<dbReference type="GO" id="GO:0033818">
    <property type="term" value="F:beta-ketoacyl-acyl-carrier-protein synthase III activity"/>
    <property type="evidence" value="ECO:0007669"/>
    <property type="project" value="UniProtKB-UniRule"/>
</dbReference>
<dbReference type="GO" id="GO:0006633">
    <property type="term" value="P:fatty acid biosynthetic process"/>
    <property type="evidence" value="ECO:0007669"/>
    <property type="project" value="UniProtKB-UniRule"/>
</dbReference>
<dbReference type="GO" id="GO:0044550">
    <property type="term" value="P:secondary metabolite biosynthetic process"/>
    <property type="evidence" value="ECO:0007669"/>
    <property type="project" value="TreeGrafter"/>
</dbReference>
<dbReference type="CDD" id="cd00830">
    <property type="entry name" value="KAS_III"/>
    <property type="match status" value="1"/>
</dbReference>
<dbReference type="FunFam" id="3.40.47.10:FF:000004">
    <property type="entry name" value="3-oxoacyl-[acyl-carrier-protein] synthase 3"/>
    <property type="match status" value="1"/>
</dbReference>
<dbReference type="Gene3D" id="3.40.47.10">
    <property type="match status" value="1"/>
</dbReference>
<dbReference type="HAMAP" id="MF_01815">
    <property type="entry name" value="FabH"/>
    <property type="match status" value="1"/>
</dbReference>
<dbReference type="InterPro" id="IPR013747">
    <property type="entry name" value="ACP_syn_III_C"/>
</dbReference>
<dbReference type="InterPro" id="IPR013751">
    <property type="entry name" value="ACP_syn_III_N"/>
</dbReference>
<dbReference type="InterPro" id="IPR004655">
    <property type="entry name" value="FabH"/>
</dbReference>
<dbReference type="InterPro" id="IPR016039">
    <property type="entry name" value="Thiolase-like"/>
</dbReference>
<dbReference type="NCBIfam" id="TIGR00747">
    <property type="entry name" value="fabH"/>
    <property type="match status" value="1"/>
</dbReference>
<dbReference type="NCBIfam" id="NF006829">
    <property type="entry name" value="PRK09352.1"/>
    <property type="match status" value="1"/>
</dbReference>
<dbReference type="PANTHER" id="PTHR34069">
    <property type="entry name" value="3-OXOACYL-[ACYL-CARRIER-PROTEIN] SYNTHASE 3"/>
    <property type="match status" value="1"/>
</dbReference>
<dbReference type="PANTHER" id="PTHR34069:SF2">
    <property type="entry name" value="BETA-KETOACYL-[ACYL-CARRIER-PROTEIN] SYNTHASE III"/>
    <property type="match status" value="1"/>
</dbReference>
<dbReference type="Pfam" id="PF08545">
    <property type="entry name" value="ACP_syn_III"/>
    <property type="match status" value="1"/>
</dbReference>
<dbReference type="Pfam" id="PF08541">
    <property type="entry name" value="ACP_syn_III_C"/>
    <property type="match status" value="1"/>
</dbReference>
<dbReference type="SUPFAM" id="SSF53901">
    <property type="entry name" value="Thiolase-like"/>
    <property type="match status" value="1"/>
</dbReference>
<protein>
    <recommendedName>
        <fullName evidence="1">Beta-ketoacyl-[acyl-carrier-protein] synthase III</fullName>
        <shortName evidence="1">Beta-ketoacyl-ACP synthase III</shortName>
        <shortName evidence="1">KAS III</shortName>
        <ecNumber evidence="1">2.3.1.180</ecNumber>
    </recommendedName>
    <alternativeName>
        <fullName evidence="1">3-oxoacyl-[acyl-carrier-protein] synthase 3</fullName>
    </alternativeName>
    <alternativeName>
        <fullName evidence="1">3-oxoacyl-[acyl-carrier-protein] synthase III</fullName>
    </alternativeName>
</protein>
<sequence length="322" mass="33962">MKRSIIAGVGAYLPSTVVSNDELAKRVDTSDAWIRERTGIEQRYLATADESCAFMAARAAERALAHAGMTADDVDAILVATSTPDQVFPAVAVRVQALLGAKRGFGFDLSAACSGFVYGLSMGDALIRSGQAKGVLVIGAEVFSRLLDWDDRRTNVLFGDGAGAAFLRASTDNDDPARGILSTHLHSEGEFGDILFIDGANGVAGHPGTIVMNGREVFRHAVGKMAQAVEEAMAANDLTPADIDWLVPHQANLRIIEAMGKKLDLPPEKVVVTVNRHANTSAASIPLALNEAVQDGRIQPGSVVLMEALGGGLTWGSAILRM</sequence>
<proteinExistence type="inferred from homology"/>
<gene>
    <name evidence="1" type="primary">fabH</name>
    <name type="ordered locus">GbCGDNIH1_1014</name>
</gene>
<keyword id="KW-0012">Acyltransferase</keyword>
<keyword id="KW-0963">Cytoplasm</keyword>
<keyword id="KW-0275">Fatty acid biosynthesis</keyword>
<keyword id="KW-0276">Fatty acid metabolism</keyword>
<keyword id="KW-0444">Lipid biosynthesis</keyword>
<keyword id="KW-0443">Lipid metabolism</keyword>
<keyword id="KW-0511">Multifunctional enzyme</keyword>
<keyword id="KW-1185">Reference proteome</keyword>
<keyword id="KW-0808">Transferase</keyword>
<accession>Q0BTE0</accession>